<feature type="chain" id="PRO_1000147218" description="Glucose-1-phosphate adenylyltransferase">
    <location>
        <begin position="1"/>
        <end position="470"/>
    </location>
</feature>
<feature type="binding site" evidence="1">
    <location>
        <position position="164"/>
    </location>
    <ligand>
        <name>alpha-D-glucose 1-phosphate</name>
        <dbReference type="ChEBI" id="CHEBI:58601"/>
    </ligand>
</feature>
<feature type="binding site" evidence="1">
    <location>
        <begin position="181"/>
        <end position="182"/>
    </location>
    <ligand>
        <name>alpha-D-glucose 1-phosphate</name>
        <dbReference type="ChEBI" id="CHEBI:58601"/>
    </ligand>
</feature>
<feature type="binding site" evidence="1">
    <location>
        <position position="199"/>
    </location>
    <ligand>
        <name>alpha-D-glucose 1-phosphate</name>
        <dbReference type="ChEBI" id="CHEBI:58601"/>
    </ligand>
</feature>
<reference key="1">
    <citation type="submission" date="2009-01" db="EMBL/GenBank/DDBJ databases">
        <title>Complete sequence of chromosome of Arthrobacter chlorophenolicus A6.</title>
        <authorList>
            <consortium name="US DOE Joint Genome Institute"/>
            <person name="Lucas S."/>
            <person name="Copeland A."/>
            <person name="Lapidus A."/>
            <person name="Glavina del Rio T."/>
            <person name="Tice H."/>
            <person name="Bruce D."/>
            <person name="Goodwin L."/>
            <person name="Pitluck S."/>
            <person name="Goltsman E."/>
            <person name="Clum A."/>
            <person name="Larimer F."/>
            <person name="Land M."/>
            <person name="Hauser L."/>
            <person name="Kyrpides N."/>
            <person name="Mikhailova N."/>
            <person name="Jansson J."/>
            <person name="Richardson P."/>
        </authorList>
    </citation>
    <scope>NUCLEOTIDE SEQUENCE [LARGE SCALE GENOMIC DNA]</scope>
    <source>
        <strain>ATCC 700700 / DSM 12829 / CIP 107037 / JCM 12360 / KCTC 9906 / NCIMB 13794 / A6</strain>
    </source>
</reference>
<name>GLGC_PSECP</name>
<evidence type="ECO:0000255" key="1">
    <source>
        <dbReference type="HAMAP-Rule" id="MF_00624"/>
    </source>
</evidence>
<proteinExistence type="inferred from homology"/>
<protein>
    <recommendedName>
        <fullName evidence="1">Glucose-1-phosphate adenylyltransferase</fullName>
        <ecNumber evidence="1">2.7.7.27</ecNumber>
    </recommendedName>
    <alternativeName>
        <fullName evidence="1">ADP-glucose pyrophosphorylase</fullName>
        <shortName evidence="1">ADPGlc PPase</shortName>
    </alternativeName>
    <alternativeName>
        <fullName evidence="1">ADP-glucose synthase</fullName>
    </alternativeName>
</protein>
<organism>
    <name type="scientific">Pseudarthrobacter chlorophenolicus (strain ATCC 700700 / DSM 12829 / CIP 107037 / JCM 12360 / KCTC 9906 / NCIMB 13794 / A6)</name>
    <name type="common">Arthrobacter chlorophenolicus</name>
    <dbReference type="NCBI Taxonomy" id="452863"/>
    <lineage>
        <taxon>Bacteria</taxon>
        <taxon>Bacillati</taxon>
        <taxon>Actinomycetota</taxon>
        <taxon>Actinomycetes</taxon>
        <taxon>Micrococcales</taxon>
        <taxon>Micrococcaceae</taxon>
        <taxon>Pseudarthrobacter</taxon>
    </lineage>
</organism>
<comment type="function">
    <text evidence="1">Involved in the biosynthesis of ADP-glucose, a building block required for the elongation reactions to produce glycogen. Catalyzes the reaction between ATP and alpha-D-glucose 1-phosphate (G1P) to produce pyrophosphate and ADP-Glc.</text>
</comment>
<comment type="catalytic activity">
    <reaction evidence="1">
        <text>alpha-D-glucose 1-phosphate + ATP + H(+) = ADP-alpha-D-glucose + diphosphate</text>
        <dbReference type="Rhea" id="RHEA:12120"/>
        <dbReference type="ChEBI" id="CHEBI:15378"/>
        <dbReference type="ChEBI" id="CHEBI:30616"/>
        <dbReference type="ChEBI" id="CHEBI:33019"/>
        <dbReference type="ChEBI" id="CHEBI:57498"/>
        <dbReference type="ChEBI" id="CHEBI:58601"/>
        <dbReference type="EC" id="2.7.7.27"/>
    </reaction>
</comment>
<comment type="pathway">
    <text evidence="1">Glycan biosynthesis; glycogen biosynthesis.</text>
</comment>
<comment type="subunit">
    <text evidence="1">Homotetramer.</text>
</comment>
<comment type="similarity">
    <text evidence="1">Belongs to the bacterial/plant glucose-1-phosphate adenylyltransferase family.</text>
</comment>
<gene>
    <name evidence="1" type="primary">glgC</name>
    <name type="ordered locus">Achl_1887</name>
</gene>
<keyword id="KW-0067">ATP-binding</keyword>
<keyword id="KW-0119">Carbohydrate metabolism</keyword>
<keyword id="KW-0320">Glycogen biosynthesis</keyword>
<keyword id="KW-0321">Glycogen metabolism</keyword>
<keyword id="KW-0547">Nucleotide-binding</keyword>
<keyword id="KW-0548">Nucleotidyltransferase</keyword>
<keyword id="KW-0808">Transferase</keyword>
<sequence length="470" mass="50717">MPLNKKVLAIVLAGGEGNRLMPLTADRAKPAVPFAGSYRLIDFAISNLVNSRYLQIVVLTQYKSHSLDRHISEAWRMSTQLGNYVASVPAQQRVGKSWFLGSANAIYQSLNLIHDANPDIVVVVGADHVYRMDFAQMVEQHVHSGAKATVAAVRQPLNMADQFGVIEVDQNDPQKIAAFVEKPASTPGLAADPSQFLASMGNYVFDADALVAALHVDAERLDTKHDMGGDIIPYFVNQGEAGVYDFTLNEIPGSTERDRTYWRDVGTIDSFYDAHMDLISPLPVFNLYNSEWPIYTRQSISPPAKFVRGLNNTVGTALDSIVSSGVVISGGVVEGSVLSNDVYVATSSRVIDSVLMDKVQVGEGAVINRAIIDKNVKVPAGAAIGLDPELDRARGFKVTDSGITVLSKYQEVPEPGEHERQLAAKNLHLVPNAVKAAADQYPEVRESVDKVARTHAAAAAAEASPGARVS</sequence>
<accession>B8H8I4</accession>
<dbReference type="EC" id="2.7.7.27" evidence="1"/>
<dbReference type="EMBL" id="CP001341">
    <property type="protein sequence ID" value="ACL39862.1"/>
    <property type="molecule type" value="Genomic_DNA"/>
</dbReference>
<dbReference type="RefSeq" id="WP_015937082.1">
    <property type="nucleotide sequence ID" value="NC_011886.1"/>
</dbReference>
<dbReference type="SMR" id="B8H8I4"/>
<dbReference type="STRING" id="452863.Achl_1887"/>
<dbReference type="KEGG" id="ach:Achl_1887"/>
<dbReference type="eggNOG" id="COG0448">
    <property type="taxonomic scope" value="Bacteria"/>
</dbReference>
<dbReference type="HOGENOM" id="CLU_029499_14_1_11"/>
<dbReference type="OrthoDB" id="9801810at2"/>
<dbReference type="UniPathway" id="UPA00164"/>
<dbReference type="Proteomes" id="UP000002505">
    <property type="component" value="Chromosome"/>
</dbReference>
<dbReference type="GO" id="GO:0005524">
    <property type="term" value="F:ATP binding"/>
    <property type="evidence" value="ECO:0007669"/>
    <property type="project" value="UniProtKB-KW"/>
</dbReference>
<dbReference type="GO" id="GO:0008878">
    <property type="term" value="F:glucose-1-phosphate adenylyltransferase activity"/>
    <property type="evidence" value="ECO:0007669"/>
    <property type="project" value="UniProtKB-UniRule"/>
</dbReference>
<dbReference type="GO" id="GO:0005978">
    <property type="term" value="P:glycogen biosynthetic process"/>
    <property type="evidence" value="ECO:0007669"/>
    <property type="project" value="UniProtKB-UniRule"/>
</dbReference>
<dbReference type="CDD" id="cd02508">
    <property type="entry name" value="ADP_Glucose_PP"/>
    <property type="match status" value="1"/>
</dbReference>
<dbReference type="CDD" id="cd04651">
    <property type="entry name" value="LbH_G1P_AT_C"/>
    <property type="match status" value="1"/>
</dbReference>
<dbReference type="Gene3D" id="2.160.10.10">
    <property type="entry name" value="Hexapeptide repeat proteins"/>
    <property type="match status" value="1"/>
</dbReference>
<dbReference type="Gene3D" id="3.90.550.10">
    <property type="entry name" value="Spore Coat Polysaccharide Biosynthesis Protein SpsA, Chain A"/>
    <property type="match status" value="1"/>
</dbReference>
<dbReference type="HAMAP" id="MF_00624">
    <property type="entry name" value="GlgC"/>
    <property type="match status" value="1"/>
</dbReference>
<dbReference type="InterPro" id="IPR011831">
    <property type="entry name" value="ADP-Glc_PPase"/>
</dbReference>
<dbReference type="InterPro" id="IPR005836">
    <property type="entry name" value="ADP_Glu_pyroP_CS"/>
</dbReference>
<dbReference type="InterPro" id="IPR023049">
    <property type="entry name" value="GlgC_bac"/>
</dbReference>
<dbReference type="InterPro" id="IPR056818">
    <property type="entry name" value="GlmU/GlgC-like_hexapep"/>
</dbReference>
<dbReference type="InterPro" id="IPR005835">
    <property type="entry name" value="NTP_transferase_dom"/>
</dbReference>
<dbReference type="InterPro" id="IPR029044">
    <property type="entry name" value="Nucleotide-diphossugar_trans"/>
</dbReference>
<dbReference type="InterPro" id="IPR011004">
    <property type="entry name" value="Trimer_LpxA-like_sf"/>
</dbReference>
<dbReference type="NCBIfam" id="TIGR02091">
    <property type="entry name" value="glgC"/>
    <property type="match status" value="1"/>
</dbReference>
<dbReference type="NCBIfam" id="NF001947">
    <property type="entry name" value="PRK00725.1"/>
    <property type="match status" value="1"/>
</dbReference>
<dbReference type="NCBIfam" id="NF002023">
    <property type="entry name" value="PRK00844.1"/>
    <property type="match status" value="1"/>
</dbReference>
<dbReference type="PANTHER" id="PTHR43523:SF2">
    <property type="entry name" value="GLUCOSE-1-PHOSPHATE ADENYLYLTRANSFERASE"/>
    <property type="match status" value="1"/>
</dbReference>
<dbReference type="PANTHER" id="PTHR43523">
    <property type="entry name" value="GLUCOSE-1-PHOSPHATE ADENYLYLTRANSFERASE-RELATED"/>
    <property type="match status" value="1"/>
</dbReference>
<dbReference type="Pfam" id="PF24894">
    <property type="entry name" value="Hexapep_GlmU"/>
    <property type="match status" value="1"/>
</dbReference>
<dbReference type="Pfam" id="PF00483">
    <property type="entry name" value="NTP_transferase"/>
    <property type="match status" value="1"/>
</dbReference>
<dbReference type="SUPFAM" id="SSF53448">
    <property type="entry name" value="Nucleotide-diphospho-sugar transferases"/>
    <property type="match status" value="1"/>
</dbReference>
<dbReference type="SUPFAM" id="SSF51161">
    <property type="entry name" value="Trimeric LpxA-like enzymes"/>
    <property type="match status" value="1"/>
</dbReference>
<dbReference type="PROSITE" id="PS00809">
    <property type="entry name" value="ADP_GLC_PYROPHOSPH_2"/>
    <property type="match status" value="1"/>
</dbReference>
<dbReference type="PROSITE" id="PS00810">
    <property type="entry name" value="ADP_GLC_PYROPHOSPH_3"/>
    <property type="match status" value="1"/>
</dbReference>